<organism>
    <name type="scientific">Enterobacteria phage PRD1</name>
    <name type="common">Bacteriophage PRD1</name>
    <dbReference type="NCBI Taxonomy" id="10658"/>
    <lineage>
        <taxon>Viruses</taxon>
        <taxon>Varidnaviria</taxon>
        <taxon>Bamfordvirae</taxon>
        <taxon>Preplasmiviricota</taxon>
        <taxon>Tectiliviricetes</taxon>
        <taxon>Kalamavirales</taxon>
        <taxon>Tectiviridae</taxon>
        <taxon>Alphatectivirus</taxon>
        <taxon>Alphatectivirus PRD1</taxon>
    </lineage>
</organism>
<organismHost>
    <name type="scientific">Acinetobacter calcoaceticus</name>
    <dbReference type="NCBI Taxonomy" id="471"/>
</organismHost>
<organismHost>
    <name type="scientific">Escherichia coli</name>
    <dbReference type="NCBI Taxonomy" id="562"/>
</organismHost>
<organismHost>
    <name type="scientific">Proteus mirabilis</name>
    <dbReference type="NCBI Taxonomy" id="584"/>
</organismHost>
<organismHost>
    <name type="scientific">Pseudomonas aeruginosa</name>
    <dbReference type="NCBI Taxonomy" id="287"/>
</organismHost>
<organismHost>
    <name type="scientific">Pseudomonas fluorescens</name>
    <dbReference type="NCBI Taxonomy" id="294"/>
</organismHost>
<organismHost>
    <name type="scientific">Pseudomonas putida</name>
    <name type="common">Arthrobacter siderocapsulatus</name>
    <dbReference type="NCBI Taxonomy" id="303"/>
</organismHost>
<organismHost>
    <name type="scientific">Salmonella typhimurium</name>
    <dbReference type="NCBI Taxonomy" id="90371"/>
</organismHost>
<organismHost>
    <name type="scientific">Vibrio cholerae</name>
    <dbReference type="NCBI Taxonomy" id="666"/>
</organismHost>
<name>VP11_BPPRD</name>
<accession>P27382</accession>
<accession>Q3T4M3</accession>
<sequence>MEKVKAWLIKYKWWIVAAIGGLAAFLLLKNRGGGSGGGGEYMVGSGPVYQQAGSGAVDNTMALAALQANTQLSAQNAQLQAQMDASRLQLETQLNIETLAADNAHYSTQSQLQLGMAQVDLSKYLGDLQSTTSTALAGMQSDTAKYQSNIQLQAENIRANTSLAEIDAQKYIVGKQADIAKYQAKTERRGQDYGFALGLLNFGGKFF</sequence>
<evidence type="ECO:0000255" key="1"/>
<evidence type="ECO:0000269" key="2">
    <source>
    </source>
</evidence>
<evidence type="ECO:0000305" key="3"/>
<keyword id="KW-1231">Capsid inner membrane protein</keyword>
<keyword id="KW-0175">Coiled coil</keyword>
<keyword id="KW-0903">Direct protein sequencing</keyword>
<keyword id="KW-0472">Membrane</keyword>
<keyword id="KW-1185">Reference proteome</keyword>
<keyword id="KW-0812">Transmembrane</keyword>
<keyword id="KW-1133">Transmembrane helix</keyword>
<keyword id="KW-1171">Viral genome ejection through host cell envelope</keyword>
<keyword id="KW-1162">Viral penetration into host cytoplasm</keyword>
<keyword id="KW-0946">Virion</keyword>
<keyword id="KW-1160">Virus entry into host cell</keyword>
<comment type="function">
    <text evidence="2">Component of the phage ejection machinery. Pilot protein for the formation of the tube that conducts the genome into the target cell. Probably involved in penetration of the bacterial outer membrane and for making the peptidoglycan layer accessible to the viral transglycosylase. Essential for viral infectivity.</text>
</comment>
<comment type="subcellular location">
    <subcellularLocation>
        <location evidence="3">Virion membrane</location>
        <topology evidence="3">Single-pass membrane protein</topology>
    </subcellularLocation>
    <text evidence="3">Part of the capsid inner membrane.</text>
</comment>
<reference key="1">
    <citation type="journal article" date="1991" name="Virology">
        <title>Genome organization of membrane-containing bacteriophage PRD1.</title>
        <authorList>
            <person name="Bamford J.K.H."/>
            <person name="Haenninen A.-L."/>
            <person name="Pakula T.M."/>
            <person name="Ojala P.M."/>
            <person name="Kalkkinen N."/>
            <person name="Frilander M."/>
            <person name="Bamford D.H."/>
        </authorList>
    </citation>
    <scope>NUCLEOTIDE SEQUENCE [GENOMIC DNA]</scope>
    <scope>PARTIAL PROTEIN SEQUENCE</scope>
</reference>
<reference key="2">
    <citation type="journal article" date="2005" name="J. Mol. Biol.">
        <title>A snapshot of viral evolution from genome analysis of the tectiviridae family.</title>
        <authorList>
            <person name="Saren A.M."/>
            <person name="Ravantti J.J."/>
            <person name="Benson S.D."/>
            <person name="Burnett R.M."/>
            <person name="Paulin L."/>
            <person name="Bamford D.H."/>
            <person name="Bamford J.K.H."/>
        </authorList>
    </citation>
    <scope>NUCLEOTIDE SEQUENCE [GENOMIC DNA]</scope>
    <scope>SEQUENCE REVISION</scope>
</reference>
<reference key="3">
    <citation type="journal article" date="2002" name="Mol. Microbiol.">
        <title>Sequential model of phage PRD1 DNA delivery: active involvement of the viral membrane.</title>
        <authorList>
            <person name="Grahn A.M."/>
            <person name="Daugelavicius R."/>
            <person name="Bamford D.H."/>
        </authorList>
    </citation>
    <scope>FUNCTION</scope>
</reference>
<protein>
    <recommendedName>
        <fullName>Infectivity protein P11</fullName>
    </recommendedName>
</protein>
<feature type="chain" id="PRO_0000165353" description="Infectivity protein P11">
    <location>
        <begin position="1"/>
        <end position="207"/>
    </location>
</feature>
<feature type="transmembrane region" description="Helical" evidence="1">
    <location>
        <begin position="13"/>
        <end position="28"/>
    </location>
</feature>
<feature type="coiled-coil region" evidence="1">
    <location>
        <begin position="64"/>
        <end position="95"/>
    </location>
</feature>
<gene>
    <name type="primary">XI</name>
</gene>
<proteinExistence type="evidence at protein level"/>
<dbReference type="EMBL" id="AY848689">
    <property type="protein sequence ID" value="AAX45905.1"/>
    <property type="molecule type" value="Genomic_DNA"/>
</dbReference>
<dbReference type="PIR" id="I36776">
    <property type="entry name" value="WMBPXB"/>
</dbReference>
<dbReference type="RefSeq" id="NP_040698.2">
    <property type="nucleotide sequence ID" value="NC_001421.2"/>
</dbReference>
<dbReference type="RefSeq" id="YP_009639977.1">
    <property type="nucleotide sequence ID" value="NC_001421.2"/>
</dbReference>
<dbReference type="TCDB" id="1.K.2.1.1">
    <property type="family name" value="the prd1 phage dna delivery (prd1-dd) family"/>
</dbReference>
<dbReference type="GeneID" id="1260930"/>
<dbReference type="OrthoDB" id="30963at10239"/>
<dbReference type="Proteomes" id="UP000002143">
    <property type="component" value="Segment"/>
</dbReference>
<dbReference type="GO" id="GO:0016020">
    <property type="term" value="C:membrane"/>
    <property type="evidence" value="ECO:0007669"/>
    <property type="project" value="UniProtKB-KW"/>
</dbReference>
<dbReference type="GO" id="GO:0039641">
    <property type="term" value="C:viral inner membrane"/>
    <property type="evidence" value="ECO:0007669"/>
    <property type="project" value="UniProtKB-KW"/>
</dbReference>
<dbReference type="GO" id="GO:0055036">
    <property type="term" value="C:virion membrane"/>
    <property type="evidence" value="ECO:0000314"/>
    <property type="project" value="CACAO"/>
</dbReference>
<dbReference type="GO" id="GO:0046718">
    <property type="term" value="P:symbiont entry into host cell"/>
    <property type="evidence" value="ECO:0007669"/>
    <property type="project" value="UniProtKB-KW"/>
</dbReference>